<accession>Q9D3J8</accession>
<feature type="signal peptide" evidence="1">
    <location>
        <begin position="1"/>
        <end position="16"/>
    </location>
</feature>
<feature type="chain" id="PRO_0000022614" description="Amelotin">
    <location>
        <begin position="17"/>
        <end position="213"/>
    </location>
</feature>
<feature type="region of interest" description="Disordered" evidence="4">
    <location>
        <begin position="22"/>
        <end position="43"/>
    </location>
</feature>
<feature type="region of interest" description="Disordered" evidence="4">
    <location>
        <begin position="162"/>
        <end position="213"/>
    </location>
</feature>
<feature type="compositionally biased region" description="Polar residues" evidence="4">
    <location>
        <begin position="33"/>
        <end position="43"/>
    </location>
</feature>
<feature type="compositionally biased region" description="Low complexity" evidence="4">
    <location>
        <begin position="169"/>
        <end position="180"/>
    </location>
</feature>
<proteinExistence type="evidence at transcript level"/>
<reference key="1">
    <citation type="journal article" date="2005" name="J. Dent. Res.">
        <title>Amelotin -- a novel secreted, ameloblast-specific protein.</title>
        <authorList>
            <person name="Iwasaki K."/>
            <person name="Bajenova E."/>
            <person name="Somogyi-Ganss E."/>
            <person name="Miller M."/>
            <person name="Nguyen V."/>
            <person name="Nourkeyhani H."/>
            <person name="Gao Y."/>
            <person name="Wendel M."/>
            <person name="Ganss B."/>
        </authorList>
    </citation>
    <scope>NUCLEOTIDE SEQUENCE [MRNA]</scope>
    <scope>SUBCELLULAR LOCATION</scope>
    <scope>TISSUE SPECIFICITY</scope>
    <scope>DEVELOPMENTAL STAGE</scope>
    <scope>FUNCTION</scope>
    <source>
        <tissue>Incisor</tissue>
    </source>
</reference>
<reference key="2">
    <citation type="journal article" date="2005" name="Science">
        <title>The transcriptional landscape of the mammalian genome.</title>
        <authorList>
            <person name="Carninci P."/>
            <person name="Kasukawa T."/>
            <person name="Katayama S."/>
            <person name="Gough J."/>
            <person name="Frith M.C."/>
            <person name="Maeda N."/>
            <person name="Oyama R."/>
            <person name="Ravasi T."/>
            <person name="Lenhard B."/>
            <person name="Wells C."/>
            <person name="Kodzius R."/>
            <person name="Shimokawa K."/>
            <person name="Bajic V.B."/>
            <person name="Brenner S.E."/>
            <person name="Batalov S."/>
            <person name="Forrest A.R."/>
            <person name="Zavolan M."/>
            <person name="Davis M.J."/>
            <person name="Wilming L.G."/>
            <person name="Aidinis V."/>
            <person name="Allen J.E."/>
            <person name="Ambesi-Impiombato A."/>
            <person name="Apweiler R."/>
            <person name="Aturaliya R.N."/>
            <person name="Bailey T.L."/>
            <person name="Bansal M."/>
            <person name="Baxter L."/>
            <person name="Beisel K.W."/>
            <person name="Bersano T."/>
            <person name="Bono H."/>
            <person name="Chalk A.M."/>
            <person name="Chiu K.P."/>
            <person name="Choudhary V."/>
            <person name="Christoffels A."/>
            <person name="Clutterbuck D.R."/>
            <person name="Crowe M.L."/>
            <person name="Dalla E."/>
            <person name="Dalrymple B.P."/>
            <person name="de Bono B."/>
            <person name="Della Gatta G."/>
            <person name="di Bernardo D."/>
            <person name="Down T."/>
            <person name="Engstrom P."/>
            <person name="Fagiolini M."/>
            <person name="Faulkner G."/>
            <person name="Fletcher C.F."/>
            <person name="Fukushima T."/>
            <person name="Furuno M."/>
            <person name="Futaki S."/>
            <person name="Gariboldi M."/>
            <person name="Georgii-Hemming P."/>
            <person name="Gingeras T.R."/>
            <person name="Gojobori T."/>
            <person name="Green R.E."/>
            <person name="Gustincich S."/>
            <person name="Harbers M."/>
            <person name="Hayashi Y."/>
            <person name="Hensch T.K."/>
            <person name="Hirokawa N."/>
            <person name="Hill D."/>
            <person name="Huminiecki L."/>
            <person name="Iacono M."/>
            <person name="Ikeo K."/>
            <person name="Iwama A."/>
            <person name="Ishikawa T."/>
            <person name="Jakt M."/>
            <person name="Kanapin A."/>
            <person name="Katoh M."/>
            <person name="Kawasawa Y."/>
            <person name="Kelso J."/>
            <person name="Kitamura H."/>
            <person name="Kitano H."/>
            <person name="Kollias G."/>
            <person name="Krishnan S.P."/>
            <person name="Kruger A."/>
            <person name="Kummerfeld S.K."/>
            <person name="Kurochkin I.V."/>
            <person name="Lareau L.F."/>
            <person name="Lazarevic D."/>
            <person name="Lipovich L."/>
            <person name="Liu J."/>
            <person name="Liuni S."/>
            <person name="McWilliam S."/>
            <person name="Madan Babu M."/>
            <person name="Madera M."/>
            <person name="Marchionni L."/>
            <person name="Matsuda H."/>
            <person name="Matsuzawa S."/>
            <person name="Miki H."/>
            <person name="Mignone F."/>
            <person name="Miyake S."/>
            <person name="Morris K."/>
            <person name="Mottagui-Tabar S."/>
            <person name="Mulder N."/>
            <person name="Nakano N."/>
            <person name="Nakauchi H."/>
            <person name="Ng P."/>
            <person name="Nilsson R."/>
            <person name="Nishiguchi S."/>
            <person name="Nishikawa S."/>
            <person name="Nori F."/>
            <person name="Ohara O."/>
            <person name="Okazaki Y."/>
            <person name="Orlando V."/>
            <person name="Pang K.C."/>
            <person name="Pavan W.J."/>
            <person name="Pavesi G."/>
            <person name="Pesole G."/>
            <person name="Petrovsky N."/>
            <person name="Piazza S."/>
            <person name="Reed J."/>
            <person name="Reid J.F."/>
            <person name="Ring B.Z."/>
            <person name="Ringwald M."/>
            <person name="Rost B."/>
            <person name="Ruan Y."/>
            <person name="Salzberg S.L."/>
            <person name="Sandelin A."/>
            <person name="Schneider C."/>
            <person name="Schoenbach C."/>
            <person name="Sekiguchi K."/>
            <person name="Semple C.A."/>
            <person name="Seno S."/>
            <person name="Sessa L."/>
            <person name="Sheng Y."/>
            <person name="Shibata Y."/>
            <person name="Shimada H."/>
            <person name="Shimada K."/>
            <person name="Silva D."/>
            <person name="Sinclair B."/>
            <person name="Sperling S."/>
            <person name="Stupka E."/>
            <person name="Sugiura K."/>
            <person name="Sultana R."/>
            <person name="Takenaka Y."/>
            <person name="Taki K."/>
            <person name="Tammoja K."/>
            <person name="Tan S.L."/>
            <person name="Tang S."/>
            <person name="Taylor M.S."/>
            <person name="Tegner J."/>
            <person name="Teichmann S.A."/>
            <person name="Ueda H.R."/>
            <person name="van Nimwegen E."/>
            <person name="Verardo R."/>
            <person name="Wei C.L."/>
            <person name="Yagi K."/>
            <person name="Yamanishi H."/>
            <person name="Zabarovsky E."/>
            <person name="Zhu S."/>
            <person name="Zimmer A."/>
            <person name="Hide W."/>
            <person name="Bult C."/>
            <person name="Grimmond S.M."/>
            <person name="Teasdale R.D."/>
            <person name="Liu E.T."/>
            <person name="Brusic V."/>
            <person name="Quackenbush J."/>
            <person name="Wahlestedt C."/>
            <person name="Mattick J.S."/>
            <person name="Hume D.A."/>
            <person name="Kai C."/>
            <person name="Sasaki D."/>
            <person name="Tomaru Y."/>
            <person name="Fukuda S."/>
            <person name="Kanamori-Katayama M."/>
            <person name="Suzuki M."/>
            <person name="Aoki J."/>
            <person name="Arakawa T."/>
            <person name="Iida J."/>
            <person name="Imamura K."/>
            <person name="Itoh M."/>
            <person name="Kato T."/>
            <person name="Kawaji H."/>
            <person name="Kawagashira N."/>
            <person name="Kawashima T."/>
            <person name="Kojima M."/>
            <person name="Kondo S."/>
            <person name="Konno H."/>
            <person name="Nakano K."/>
            <person name="Ninomiya N."/>
            <person name="Nishio T."/>
            <person name="Okada M."/>
            <person name="Plessy C."/>
            <person name="Shibata K."/>
            <person name="Shiraki T."/>
            <person name="Suzuki S."/>
            <person name="Tagami M."/>
            <person name="Waki K."/>
            <person name="Watahiki A."/>
            <person name="Okamura-Oho Y."/>
            <person name="Suzuki H."/>
            <person name="Kawai J."/>
            <person name="Hayashizaki Y."/>
        </authorList>
    </citation>
    <scope>NUCLEOTIDE SEQUENCE [LARGE SCALE MRNA]</scope>
    <source>
        <strain>C57BL/6J</strain>
        <tissue>Head</tissue>
    </source>
</reference>
<reference key="3">
    <citation type="journal article" date="2006" name="Biochem. J.">
        <title>Cloning of rat amelotin and localization of the protein to the basal lamina of maturation stage ameloblasts and junctional epithelium.</title>
        <authorList>
            <person name="Moffatt P."/>
            <person name="Smith C.E."/>
            <person name="St Arnaud R."/>
            <person name="Simmons D."/>
            <person name="Wright J.T."/>
            <person name="Nanci A."/>
        </authorList>
    </citation>
    <scope>TISSUE SPECIFICITY</scope>
</reference>
<reference key="4">
    <citation type="journal article" date="2015" name="J. Bone Miner. Res.">
        <title>The enamel protein amelotin is a promoter of hydroxyapatite mineralization.</title>
        <authorList>
            <person name="Abbarin N."/>
            <person name="Miguel S.S."/>
            <person name="Holcroft J."/>
            <person name="Iwasaki K."/>
            <person name="Ganss B."/>
        </authorList>
    </citation>
    <scope>FUNCTION</scope>
</reference>
<organism>
    <name type="scientific">Mus musculus</name>
    <name type="common">Mouse</name>
    <dbReference type="NCBI Taxonomy" id="10090"/>
    <lineage>
        <taxon>Eukaryota</taxon>
        <taxon>Metazoa</taxon>
        <taxon>Chordata</taxon>
        <taxon>Craniata</taxon>
        <taxon>Vertebrata</taxon>
        <taxon>Euteleostomi</taxon>
        <taxon>Mammalia</taxon>
        <taxon>Eutheria</taxon>
        <taxon>Euarchontoglires</taxon>
        <taxon>Glires</taxon>
        <taxon>Rodentia</taxon>
        <taxon>Myomorpha</taxon>
        <taxon>Muroidea</taxon>
        <taxon>Muridae</taxon>
        <taxon>Murinae</taxon>
        <taxon>Mus</taxon>
        <taxon>Mus</taxon>
    </lineage>
</organism>
<dbReference type="EMBL" id="AK017352">
    <property type="protein sequence ID" value="BAB30704.1"/>
    <property type="molecule type" value="mRNA"/>
</dbReference>
<dbReference type="CCDS" id="CCDS51538.1"/>
<dbReference type="RefSeq" id="NP_082069.1">
    <property type="nucleotide sequence ID" value="NM_027793.1"/>
</dbReference>
<dbReference type="FunCoup" id="Q9D3J8">
    <property type="interactions" value="14"/>
</dbReference>
<dbReference type="STRING" id="10090.ENSMUSP00000073081"/>
<dbReference type="GlyGen" id="Q9D3J8">
    <property type="glycosylation" value="1 site"/>
</dbReference>
<dbReference type="PhosphoSitePlus" id="Q9D3J8"/>
<dbReference type="PaxDb" id="10090-ENSMUSP00000073081"/>
<dbReference type="Antibodypedia" id="50435">
    <property type="antibodies" value="195 antibodies from 22 providers"/>
</dbReference>
<dbReference type="Ensembl" id="ENSMUST00000073363.2">
    <property type="protein sequence ID" value="ENSMUSP00000073081.2"/>
    <property type="gene ID" value="ENSMUSG00000029282.4"/>
</dbReference>
<dbReference type="GeneID" id="71421"/>
<dbReference type="KEGG" id="mmu:71421"/>
<dbReference type="UCSC" id="uc008xzq.1">
    <property type="organism name" value="mouse"/>
</dbReference>
<dbReference type="AGR" id="MGI:1918671"/>
<dbReference type="CTD" id="401138"/>
<dbReference type="MGI" id="MGI:1918671">
    <property type="gene designation" value="Amtn"/>
</dbReference>
<dbReference type="VEuPathDB" id="HostDB:ENSMUSG00000029282"/>
<dbReference type="eggNOG" id="ENOG502SFV7">
    <property type="taxonomic scope" value="Eukaryota"/>
</dbReference>
<dbReference type="GeneTree" id="ENSGT00390000006715"/>
<dbReference type="HOGENOM" id="CLU_082745_0_0_1"/>
<dbReference type="InParanoid" id="Q9D3J8"/>
<dbReference type="OMA" id="PQMLPIF"/>
<dbReference type="OrthoDB" id="9837242at2759"/>
<dbReference type="PhylomeDB" id="Q9D3J8"/>
<dbReference type="TreeFam" id="TF337677"/>
<dbReference type="Reactome" id="R-MMU-381426">
    <property type="pathway name" value="Regulation of Insulin-like Growth Factor (IGF) transport and uptake by Insulin-like Growth Factor Binding Proteins (IGFBPs)"/>
</dbReference>
<dbReference type="Reactome" id="R-MMU-8957275">
    <property type="pathway name" value="Post-translational protein phosphorylation"/>
</dbReference>
<dbReference type="BioGRID-ORCS" id="71421">
    <property type="hits" value="3 hits in 79 CRISPR screens"/>
</dbReference>
<dbReference type="PRO" id="PR:Q9D3J8"/>
<dbReference type="Proteomes" id="UP000000589">
    <property type="component" value="Chromosome 5"/>
</dbReference>
<dbReference type="RNAct" id="Q9D3J8">
    <property type="molecule type" value="protein"/>
</dbReference>
<dbReference type="Bgee" id="ENSMUSG00000029282">
    <property type="expression patterns" value="Expressed in molar tooth and 16 other cell types or tissues"/>
</dbReference>
<dbReference type="GO" id="GO:0005604">
    <property type="term" value="C:basement membrane"/>
    <property type="evidence" value="ECO:0000314"/>
    <property type="project" value="HGNC-UCL"/>
</dbReference>
<dbReference type="GO" id="GO:0005911">
    <property type="term" value="C:cell-cell junction"/>
    <property type="evidence" value="ECO:0000314"/>
    <property type="project" value="HGNC-UCL"/>
</dbReference>
<dbReference type="GO" id="GO:0031012">
    <property type="term" value="C:extracellular matrix"/>
    <property type="evidence" value="ECO:0000315"/>
    <property type="project" value="HGNC-UCL"/>
</dbReference>
<dbReference type="GO" id="GO:0005576">
    <property type="term" value="C:extracellular region"/>
    <property type="evidence" value="ECO:0007669"/>
    <property type="project" value="UniProtKB-SubCell"/>
</dbReference>
<dbReference type="GO" id="GO:0031214">
    <property type="term" value="P:biomineral tissue development"/>
    <property type="evidence" value="ECO:0007669"/>
    <property type="project" value="UniProtKB-KW"/>
</dbReference>
<dbReference type="GO" id="GO:0007155">
    <property type="term" value="P:cell adhesion"/>
    <property type="evidence" value="ECO:0007669"/>
    <property type="project" value="UniProtKB-KW"/>
</dbReference>
<dbReference type="GO" id="GO:0042475">
    <property type="term" value="P:odontogenesis of dentin-containing tooth"/>
    <property type="evidence" value="ECO:0000270"/>
    <property type="project" value="HGNC-UCL"/>
</dbReference>
<dbReference type="GO" id="GO:0070175">
    <property type="term" value="P:positive regulation of enamel mineralization"/>
    <property type="evidence" value="ECO:0000315"/>
    <property type="project" value="UniProtKB"/>
</dbReference>
<dbReference type="InterPro" id="IPR031501">
    <property type="entry name" value="Amelotin"/>
</dbReference>
<dbReference type="PANTHER" id="PTHR36858">
    <property type="entry name" value="AMELOTIN"/>
    <property type="match status" value="1"/>
</dbReference>
<dbReference type="PANTHER" id="PTHR36858:SF1">
    <property type="entry name" value="AMELOTIN"/>
    <property type="match status" value="1"/>
</dbReference>
<dbReference type="Pfam" id="PF15757">
    <property type="entry name" value="Amelotin"/>
    <property type="match status" value="1"/>
</dbReference>
<keyword id="KW-0091">Biomineralization</keyword>
<keyword id="KW-0130">Cell adhesion</keyword>
<keyword id="KW-0325">Glycoprotein</keyword>
<keyword id="KW-1185">Reference proteome</keyword>
<keyword id="KW-0964">Secreted</keyword>
<keyword id="KW-0732">Signal</keyword>
<comment type="function">
    <text evidence="5 7">Is a promoter of calcium phosphate mineralization, playing a critical role in the formation of the compact, mineralized, aprismatic enamel surface layer during the maturation stage of amelogenesis.</text>
</comment>
<comment type="subcellular location">
    <subcellularLocation>
        <location evidence="5">Secreted</location>
    </subcellularLocation>
</comment>
<comment type="tissue specificity">
    <text evidence="5 6">Specifically expressed in maturation-stage ameloblasts.</text>
</comment>
<comment type="developmental stage">
    <text evidence="5">Expression increases greatly with the transition from secretory to maturation-stage ameloblasts, is maintained during the maturation stage and gradually declines towards the zone of reduced ameloblasts.</text>
</comment>
<comment type="PTM">
    <text evidence="3">Phosphorylated by FAM20C in vitro.</text>
</comment>
<comment type="PTM">
    <text evidence="2">O-glycosylated.</text>
</comment>
<comment type="similarity">
    <text evidence="8">Belongs to the amelotin family.</text>
</comment>
<sequence>MKTMILLLCLLGSAQSLPKQLNPASGVPATKPTPGQVTPLPQQQPNQVFPSISLIPLTQLLTLGSDLPLFNPAAGPHGAHTLPFTLGPLNGQQQLQPQMLPIIVAQLGAQGALLSSEELPLASQIFTGLLIHPLFPGAIPPSGQAGTKPDVQNGVLPTRQAGAKAVNQGTTPGHVTTPGVTDDDDYEMSTPAGLRRATHTTEGTTIDPPNRTQ</sequence>
<gene>
    <name type="primary">Amtn</name>
</gene>
<evidence type="ECO:0000250" key="1"/>
<evidence type="ECO:0000250" key="2">
    <source>
        <dbReference type="UniProtKB" id="Q3HS82"/>
    </source>
</evidence>
<evidence type="ECO:0000250" key="3">
    <source>
        <dbReference type="UniProtKB" id="Q6UX39"/>
    </source>
</evidence>
<evidence type="ECO:0000256" key="4">
    <source>
        <dbReference type="SAM" id="MobiDB-lite"/>
    </source>
</evidence>
<evidence type="ECO:0000269" key="5">
    <source>
    </source>
</evidence>
<evidence type="ECO:0000269" key="6">
    <source>
    </source>
</evidence>
<evidence type="ECO:0000269" key="7">
    <source>
    </source>
</evidence>
<evidence type="ECO:0000305" key="8"/>
<name>AMTN_MOUSE</name>
<protein>
    <recommendedName>
        <fullName>Amelotin</fullName>
    </recommendedName>
</protein>